<keyword id="KW-0067">ATP-binding</keyword>
<keyword id="KW-0133">Cell shape</keyword>
<keyword id="KW-0961">Cell wall biogenesis/degradation</keyword>
<keyword id="KW-0963">Cytoplasm</keyword>
<keyword id="KW-0436">Ligase</keyword>
<keyword id="KW-0460">Magnesium</keyword>
<keyword id="KW-0464">Manganese</keyword>
<keyword id="KW-0479">Metal-binding</keyword>
<keyword id="KW-0547">Nucleotide-binding</keyword>
<keyword id="KW-0573">Peptidoglycan synthesis</keyword>
<gene>
    <name evidence="2" type="primary">ddl</name>
    <name type="ordered locus">M6_Spy1185</name>
</gene>
<protein>
    <recommendedName>
        <fullName evidence="2">D-alanine--D-alanine ligase</fullName>
        <ecNumber evidence="2">6.3.2.4</ecNumber>
    </recommendedName>
    <alternativeName>
        <fullName evidence="2">D-Ala-D-Ala ligase</fullName>
    </alternativeName>
    <alternativeName>
        <fullName evidence="2">D-alanylalanine synthetase</fullName>
    </alternativeName>
</protein>
<reference key="1">
    <citation type="journal article" date="2004" name="J. Infect. Dis.">
        <title>Progress toward characterization of the group A Streptococcus metagenome: complete genome sequence of a macrolide-resistant serotype M6 strain.</title>
        <authorList>
            <person name="Banks D.J."/>
            <person name="Porcella S.F."/>
            <person name="Barbian K.D."/>
            <person name="Beres S.B."/>
            <person name="Philips L.E."/>
            <person name="Voyich J.M."/>
            <person name="DeLeo F.R."/>
            <person name="Martin J.M."/>
            <person name="Somerville G.A."/>
            <person name="Musser J.M."/>
        </authorList>
    </citation>
    <scope>NUCLEOTIDE SEQUENCE [LARGE SCALE GENOMIC DNA]</scope>
    <source>
        <strain>ATCC BAA-946 / MGAS10394</strain>
    </source>
</reference>
<dbReference type="EC" id="6.3.2.4" evidence="2"/>
<dbReference type="EMBL" id="CP000003">
    <property type="protein sequence ID" value="AAT87320.1"/>
    <property type="molecule type" value="Genomic_DNA"/>
</dbReference>
<dbReference type="RefSeq" id="WP_002994369.1">
    <property type="nucleotide sequence ID" value="NC_006086.1"/>
</dbReference>
<dbReference type="SMR" id="Q5XB93"/>
<dbReference type="KEGG" id="spa:M6_Spy1185"/>
<dbReference type="HOGENOM" id="CLU_039268_0_0_9"/>
<dbReference type="UniPathway" id="UPA00219"/>
<dbReference type="Proteomes" id="UP000001167">
    <property type="component" value="Chromosome"/>
</dbReference>
<dbReference type="GO" id="GO:0005829">
    <property type="term" value="C:cytosol"/>
    <property type="evidence" value="ECO:0007669"/>
    <property type="project" value="TreeGrafter"/>
</dbReference>
<dbReference type="GO" id="GO:0005524">
    <property type="term" value="F:ATP binding"/>
    <property type="evidence" value="ECO:0007669"/>
    <property type="project" value="UniProtKB-KW"/>
</dbReference>
<dbReference type="GO" id="GO:0008716">
    <property type="term" value="F:D-alanine-D-alanine ligase activity"/>
    <property type="evidence" value="ECO:0007669"/>
    <property type="project" value="UniProtKB-UniRule"/>
</dbReference>
<dbReference type="GO" id="GO:0046872">
    <property type="term" value="F:metal ion binding"/>
    <property type="evidence" value="ECO:0007669"/>
    <property type="project" value="UniProtKB-KW"/>
</dbReference>
<dbReference type="GO" id="GO:0071555">
    <property type="term" value="P:cell wall organization"/>
    <property type="evidence" value="ECO:0007669"/>
    <property type="project" value="UniProtKB-KW"/>
</dbReference>
<dbReference type="GO" id="GO:0009252">
    <property type="term" value="P:peptidoglycan biosynthetic process"/>
    <property type="evidence" value="ECO:0007669"/>
    <property type="project" value="UniProtKB-UniRule"/>
</dbReference>
<dbReference type="GO" id="GO:0008360">
    <property type="term" value="P:regulation of cell shape"/>
    <property type="evidence" value="ECO:0007669"/>
    <property type="project" value="UniProtKB-KW"/>
</dbReference>
<dbReference type="FunFam" id="3.30.1490.20:FF:000007">
    <property type="entry name" value="D-alanine--D-alanine ligase"/>
    <property type="match status" value="1"/>
</dbReference>
<dbReference type="FunFam" id="3.30.470.20:FF:000008">
    <property type="entry name" value="D-alanine--D-alanine ligase"/>
    <property type="match status" value="1"/>
</dbReference>
<dbReference type="Gene3D" id="3.40.50.20">
    <property type="match status" value="1"/>
</dbReference>
<dbReference type="Gene3D" id="3.30.1490.20">
    <property type="entry name" value="ATP-grasp fold, A domain"/>
    <property type="match status" value="1"/>
</dbReference>
<dbReference type="Gene3D" id="3.30.470.20">
    <property type="entry name" value="ATP-grasp fold, B domain"/>
    <property type="match status" value="1"/>
</dbReference>
<dbReference type="HAMAP" id="MF_00047">
    <property type="entry name" value="Dala_Dala_lig"/>
    <property type="match status" value="1"/>
</dbReference>
<dbReference type="InterPro" id="IPR011761">
    <property type="entry name" value="ATP-grasp"/>
</dbReference>
<dbReference type="InterPro" id="IPR013815">
    <property type="entry name" value="ATP_grasp_subdomain_1"/>
</dbReference>
<dbReference type="InterPro" id="IPR000291">
    <property type="entry name" value="D-Ala_lig_Van_CS"/>
</dbReference>
<dbReference type="InterPro" id="IPR005905">
    <property type="entry name" value="D_ala_D_ala"/>
</dbReference>
<dbReference type="InterPro" id="IPR011095">
    <property type="entry name" value="Dala_Dala_lig_C"/>
</dbReference>
<dbReference type="InterPro" id="IPR011127">
    <property type="entry name" value="Dala_Dala_lig_N"/>
</dbReference>
<dbReference type="InterPro" id="IPR016185">
    <property type="entry name" value="PreATP-grasp_dom_sf"/>
</dbReference>
<dbReference type="NCBIfam" id="TIGR01205">
    <property type="entry name" value="D_ala_D_alaTIGR"/>
    <property type="match status" value="1"/>
</dbReference>
<dbReference type="NCBIfam" id="NF002528">
    <property type="entry name" value="PRK01966.1-4"/>
    <property type="match status" value="1"/>
</dbReference>
<dbReference type="NCBIfam" id="NF002529">
    <property type="entry name" value="PRK01966.1-5"/>
    <property type="match status" value="1"/>
</dbReference>
<dbReference type="PANTHER" id="PTHR23132">
    <property type="entry name" value="D-ALANINE--D-ALANINE LIGASE"/>
    <property type="match status" value="1"/>
</dbReference>
<dbReference type="PANTHER" id="PTHR23132:SF25">
    <property type="entry name" value="D-ALANINE--D-ALANINE LIGASE A"/>
    <property type="match status" value="1"/>
</dbReference>
<dbReference type="Pfam" id="PF07478">
    <property type="entry name" value="Dala_Dala_lig_C"/>
    <property type="match status" value="1"/>
</dbReference>
<dbReference type="Pfam" id="PF01820">
    <property type="entry name" value="Dala_Dala_lig_N"/>
    <property type="match status" value="1"/>
</dbReference>
<dbReference type="PIRSF" id="PIRSF039102">
    <property type="entry name" value="Ddl/VanB"/>
    <property type="match status" value="1"/>
</dbReference>
<dbReference type="SUPFAM" id="SSF56059">
    <property type="entry name" value="Glutathione synthetase ATP-binding domain-like"/>
    <property type="match status" value="1"/>
</dbReference>
<dbReference type="SUPFAM" id="SSF52440">
    <property type="entry name" value="PreATP-grasp domain"/>
    <property type="match status" value="1"/>
</dbReference>
<dbReference type="PROSITE" id="PS50975">
    <property type="entry name" value="ATP_GRASP"/>
    <property type="match status" value="1"/>
</dbReference>
<dbReference type="PROSITE" id="PS00843">
    <property type="entry name" value="DALA_DALA_LIGASE_1"/>
    <property type="match status" value="1"/>
</dbReference>
<dbReference type="PROSITE" id="PS00844">
    <property type="entry name" value="DALA_DALA_LIGASE_2"/>
    <property type="match status" value="1"/>
</dbReference>
<evidence type="ECO:0000250" key="1"/>
<evidence type="ECO:0000255" key="2">
    <source>
        <dbReference type="HAMAP-Rule" id="MF_00047"/>
    </source>
</evidence>
<feature type="chain" id="PRO_0000177891" description="D-alanine--D-alanine ligase">
    <location>
        <begin position="1"/>
        <end position="348"/>
    </location>
</feature>
<feature type="domain" description="ATP-grasp" evidence="2">
    <location>
        <begin position="132"/>
        <end position="334"/>
    </location>
</feature>
<feature type="binding site" evidence="2">
    <location>
        <begin position="162"/>
        <end position="217"/>
    </location>
    <ligand>
        <name>ATP</name>
        <dbReference type="ChEBI" id="CHEBI:30616"/>
    </ligand>
</feature>
<feature type="binding site" evidence="2">
    <location>
        <position position="288"/>
    </location>
    <ligand>
        <name>Mg(2+)</name>
        <dbReference type="ChEBI" id="CHEBI:18420"/>
        <label>1</label>
    </ligand>
</feature>
<feature type="binding site" evidence="2">
    <location>
        <position position="301"/>
    </location>
    <ligand>
        <name>Mg(2+)</name>
        <dbReference type="ChEBI" id="CHEBI:18420"/>
        <label>1</label>
    </ligand>
</feature>
<feature type="binding site" evidence="2">
    <location>
        <position position="301"/>
    </location>
    <ligand>
        <name>Mg(2+)</name>
        <dbReference type="ChEBI" id="CHEBI:18420"/>
        <label>2</label>
    </ligand>
</feature>
<feature type="binding site" evidence="2">
    <location>
        <position position="303"/>
    </location>
    <ligand>
        <name>Mg(2+)</name>
        <dbReference type="ChEBI" id="CHEBI:18420"/>
        <label>2</label>
    </ligand>
</feature>
<accession>Q5XB93</accession>
<organism>
    <name type="scientific">Streptococcus pyogenes serotype M6 (strain ATCC BAA-946 / MGAS10394)</name>
    <dbReference type="NCBI Taxonomy" id="286636"/>
    <lineage>
        <taxon>Bacteria</taxon>
        <taxon>Bacillati</taxon>
        <taxon>Bacillota</taxon>
        <taxon>Bacilli</taxon>
        <taxon>Lactobacillales</taxon>
        <taxon>Streptococcaceae</taxon>
        <taxon>Streptococcus</taxon>
    </lineage>
</organism>
<comment type="function">
    <text evidence="2">Cell wall formation.</text>
</comment>
<comment type="catalytic activity">
    <reaction evidence="2">
        <text>2 D-alanine + ATP = D-alanyl-D-alanine + ADP + phosphate + H(+)</text>
        <dbReference type="Rhea" id="RHEA:11224"/>
        <dbReference type="ChEBI" id="CHEBI:15378"/>
        <dbReference type="ChEBI" id="CHEBI:30616"/>
        <dbReference type="ChEBI" id="CHEBI:43474"/>
        <dbReference type="ChEBI" id="CHEBI:57416"/>
        <dbReference type="ChEBI" id="CHEBI:57822"/>
        <dbReference type="ChEBI" id="CHEBI:456216"/>
        <dbReference type="EC" id="6.3.2.4"/>
    </reaction>
</comment>
<comment type="cofactor">
    <cofactor evidence="1">
        <name>Mg(2+)</name>
        <dbReference type="ChEBI" id="CHEBI:18420"/>
    </cofactor>
    <cofactor evidence="1">
        <name>Mn(2+)</name>
        <dbReference type="ChEBI" id="CHEBI:29035"/>
    </cofactor>
    <text evidence="1">Binds 2 magnesium or manganese ions per subunit.</text>
</comment>
<comment type="pathway">
    <text evidence="2">Cell wall biogenesis; peptidoglycan biosynthesis.</text>
</comment>
<comment type="subcellular location">
    <subcellularLocation>
        <location evidence="2">Cytoplasm</location>
    </subcellularLocation>
</comment>
<comment type="similarity">
    <text evidence="2">Belongs to the D-alanine--D-alanine ligase family.</text>
</comment>
<proteinExistence type="inferred from homology"/>
<name>DDL_STRP6</name>
<sequence length="348" mass="38979">MSKQTLVLLYGGRSAEREVSVLSAESVMRAVNYDKFLVKTYFITQMGQFIRTQQFSEKPSESERLMTNETIELTQKIKPSDIYEEGAVVFPVLHGPMGEDGSIQGFLEVLRMPYIGTNVMSSSIAMDKITTKRVLESIGIPQVAYTVYIDGQDLEACLVETLARLTFPIFVKPANMGSSVGISKAQTKVELRKAIQLALTYDSRVLIEQGVVAREIEVGLLGNDKVKSTLPGEVIKDVDFYDYQAKYVDNKITMAIPADVDQSIVTEMRSYAEVAFKALGGCGLSRCDFFLTQDGQVYLNELNTMPGFTQWSMYPLLWENMGLAYPDLIEELVTLAQEIFDQRESHLI</sequence>